<evidence type="ECO:0000255" key="1">
    <source>
        <dbReference type="HAMAP-Rule" id="MF_00087"/>
    </source>
</evidence>
<reference key="1">
    <citation type="journal article" date="2008" name="BMC Genomics">
        <title>The genome sequence of the fish pathogen Aliivibrio salmonicida strain LFI1238 shows extensive evidence of gene decay.</title>
        <authorList>
            <person name="Hjerde E."/>
            <person name="Lorentzen M.S."/>
            <person name="Holden M.T."/>
            <person name="Seeger K."/>
            <person name="Paulsen S."/>
            <person name="Bason N."/>
            <person name="Churcher C."/>
            <person name="Harris D."/>
            <person name="Norbertczak H."/>
            <person name="Quail M.A."/>
            <person name="Sanders S."/>
            <person name="Thurston S."/>
            <person name="Parkhill J."/>
            <person name="Willassen N.P."/>
            <person name="Thomson N.R."/>
        </authorList>
    </citation>
    <scope>NUCLEOTIDE SEQUENCE [LARGE SCALE GENOMIC DNA]</scope>
    <source>
        <strain>LFI1238</strain>
    </source>
</reference>
<keyword id="KW-0521">NADP</keyword>
<keyword id="KW-0560">Oxidoreductase</keyword>
<keyword id="KW-0627">Porphyrin biosynthesis</keyword>
<organism>
    <name type="scientific">Aliivibrio salmonicida (strain LFI1238)</name>
    <name type="common">Vibrio salmonicida (strain LFI1238)</name>
    <dbReference type="NCBI Taxonomy" id="316275"/>
    <lineage>
        <taxon>Bacteria</taxon>
        <taxon>Pseudomonadati</taxon>
        <taxon>Pseudomonadota</taxon>
        <taxon>Gammaproteobacteria</taxon>
        <taxon>Vibrionales</taxon>
        <taxon>Vibrionaceae</taxon>
        <taxon>Aliivibrio</taxon>
    </lineage>
</organism>
<protein>
    <recommendedName>
        <fullName evidence="1">Glutamyl-tRNA reductase</fullName>
        <shortName evidence="1">GluTR</shortName>
        <ecNumber evidence="1">1.2.1.70</ecNumber>
    </recommendedName>
</protein>
<feature type="chain" id="PRO_1000093113" description="Glutamyl-tRNA reductase">
    <location>
        <begin position="1"/>
        <end position="418"/>
    </location>
</feature>
<feature type="active site" description="Nucleophile" evidence="1">
    <location>
        <position position="50"/>
    </location>
</feature>
<feature type="binding site" evidence="1">
    <location>
        <begin position="49"/>
        <end position="52"/>
    </location>
    <ligand>
        <name>substrate</name>
    </ligand>
</feature>
<feature type="binding site" evidence="1">
    <location>
        <position position="108"/>
    </location>
    <ligand>
        <name>substrate</name>
    </ligand>
</feature>
<feature type="binding site" evidence="1">
    <location>
        <begin position="113"/>
        <end position="115"/>
    </location>
    <ligand>
        <name>substrate</name>
    </ligand>
</feature>
<feature type="binding site" evidence="1">
    <location>
        <position position="119"/>
    </location>
    <ligand>
        <name>substrate</name>
    </ligand>
</feature>
<feature type="binding site" evidence="1">
    <location>
        <begin position="188"/>
        <end position="193"/>
    </location>
    <ligand>
        <name>NADP(+)</name>
        <dbReference type="ChEBI" id="CHEBI:58349"/>
    </ligand>
</feature>
<feature type="site" description="Important for activity" evidence="1">
    <location>
        <position position="98"/>
    </location>
</feature>
<sequence>MSLLVIGINHTSATVDLREKVAFSPDKLTKALDELKNSDAIKSGVILSTCNRTEIYCEVKLGISSGYVINWLAEFHHVALDLLMPSIYIYEEQAAVKHLMRVSCGLDSLVLGEPQILGQVKKAFADAREHNAVEGVVEKLFQSDFSVAKRVRTETNIGGNAVSVAYAACTLARQIFESLAESTVMLVGAGETIELVAKHLNDAGCKQLIVANRTRERAMILADQFNADVISLPEIPEHLSKADIIISSTASPLPIIGKGMVESALKQRRHQPMLFVDIAVPRDIESEVADLNDVYLYSVDDLKSIIDHNIEQRKIEAIQAEAIVSEESAGFMTWIRSRQAVNSIRQYRENSESIRIELLQKSIQALASGQNAEKVLAELSNKLTNKLIHAPTLAMQQAAKNGEPDKLAVIRTSIGLDN</sequence>
<comment type="function">
    <text evidence="1">Catalyzes the NADPH-dependent reduction of glutamyl-tRNA(Glu) to glutamate 1-semialdehyde (GSA).</text>
</comment>
<comment type="catalytic activity">
    <reaction evidence="1">
        <text>(S)-4-amino-5-oxopentanoate + tRNA(Glu) + NADP(+) = L-glutamyl-tRNA(Glu) + NADPH + H(+)</text>
        <dbReference type="Rhea" id="RHEA:12344"/>
        <dbReference type="Rhea" id="RHEA-COMP:9663"/>
        <dbReference type="Rhea" id="RHEA-COMP:9680"/>
        <dbReference type="ChEBI" id="CHEBI:15378"/>
        <dbReference type="ChEBI" id="CHEBI:57501"/>
        <dbReference type="ChEBI" id="CHEBI:57783"/>
        <dbReference type="ChEBI" id="CHEBI:58349"/>
        <dbReference type="ChEBI" id="CHEBI:78442"/>
        <dbReference type="ChEBI" id="CHEBI:78520"/>
        <dbReference type="EC" id="1.2.1.70"/>
    </reaction>
</comment>
<comment type="pathway">
    <text evidence="1">Porphyrin-containing compound metabolism; protoporphyrin-IX biosynthesis; 5-aminolevulinate from L-glutamyl-tRNA(Glu): step 1/2.</text>
</comment>
<comment type="subunit">
    <text evidence="1">Homodimer.</text>
</comment>
<comment type="domain">
    <text evidence="1">Possesses an unusual extended V-shaped dimeric structure with each monomer consisting of three distinct domains arranged along a curved 'spinal' alpha-helix. The N-terminal catalytic domain specifically recognizes the glutamate moiety of the substrate. The second domain is the NADPH-binding domain, and the third C-terminal domain is responsible for dimerization.</text>
</comment>
<comment type="miscellaneous">
    <text evidence="1">During catalysis, the active site Cys acts as a nucleophile attacking the alpha-carbonyl group of tRNA-bound glutamate with the formation of a thioester intermediate between enzyme and glutamate, and the concomitant release of tRNA(Glu). The thioester intermediate is finally reduced by direct hydride transfer from NADPH, to form the product GSA.</text>
</comment>
<comment type="similarity">
    <text evidence="1">Belongs to the glutamyl-tRNA reductase family.</text>
</comment>
<name>HEM1_ALISL</name>
<proteinExistence type="inferred from homology"/>
<dbReference type="EC" id="1.2.1.70" evidence="1"/>
<dbReference type="EMBL" id="FM178379">
    <property type="protein sequence ID" value="CAQ78474.1"/>
    <property type="molecule type" value="Genomic_DNA"/>
</dbReference>
<dbReference type="RefSeq" id="WP_012549582.1">
    <property type="nucleotide sequence ID" value="NC_011312.1"/>
</dbReference>
<dbReference type="SMR" id="B6EHH4"/>
<dbReference type="KEGG" id="vsa:VSAL_I0789"/>
<dbReference type="eggNOG" id="COG0373">
    <property type="taxonomic scope" value="Bacteria"/>
</dbReference>
<dbReference type="HOGENOM" id="CLU_035113_2_2_6"/>
<dbReference type="UniPathway" id="UPA00251">
    <property type="reaction ID" value="UER00316"/>
</dbReference>
<dbReference type="Proteomes" id="UP000001730">
    <property type="component" value="Chromosome 1"/>
</dbReference>
<dbReference type="GO" id="GO:0008883">
    <property type="term" value="F:glutamyl-tRNA reductase activity"/>
    <property type="evidence" value="ECO:0007669"/>
    <property type="project" value="UniProtKB-UniRule"/>
</dbReference>
<dbReference type="GO" id="GO:0050661">
    <property type="term" value="F:NADP binding"/>
    <property type="evidence" value="ECO:0007669"/>
    <property type="project" value="InterPro"/>
</dbReference>
<dbReference type="GO" id="GO:0019353">
    <property type="term" value="P:protoporphyrinogen IX biosynthetic process from glutamate"/>
    <property type="evidence" value="ECO:0007669"/>
    <property type="project" value="TreeGrafter"/>
</dbReference>
<dbReference type="CDD" id="cd05213">
    <property type="entry name" value="NAD_bind_Glutamyl_tRNA_reduct"/>
    <property type="match status" value="1"/>
</dbReference>
<dbReference type="FunFam" id="3.30.460.30:FF:000001">
    <property type="entry name" value="Glutamyl-tRNA reductase"/>
    <property type="match status" value="1"/>
</dbReference>
<dbReference type="FunFam" id="3.40.50.720:FF:000031">
    <property type="entry name" value="Glutamyl-tRNA reductase"/>
    <property type="match status" value="1"/>
</dbReference>
<dbReference type="Gene3D" id="3.30.460.30">
    <property type="entry name" value="Glutamyl-tRNA reductase, N-terminal domain"/>
    <property type="match status" value="1"/>
</dbReference>
<dbReference type="Gene3D" id="3.40.50.720">
    <property type="entry name" value="NAD(P)-binding Rossmann-like Domain"/>
    <property type="match status" value="1"/>
</dbReference>
<dbReference type="HAMAP" id="MF_00087">
    <property type="entry name" value="Glu_tRNA_reductase"/>
    <property type="match status" value="1"/>
</dbReference>
<dbReference type="InterPro" id="IPR000343">
    <property type="entry name" value="4pyrrol_synth_GluRdtase"/>
</dbReference>
<dbReference type="InterPro" id="IPR015896">
    <property type="entry name" value="4pyrrol_synth_GluRdtase_dimer"/>
</dbReference>
<dbReference type="InterPro" id="IPR015895">
    <property type="entry name" value="4pyrrol_synth_GluRdtase_N"/>
</dbReference>
<dbReference type="InterPro" id="IPR018214">
    <property type="entry name" value="GluRdtase_CS"/>
</dbReference>
<dbReference type="InterPro" id="IPR036453">
    <property type="entry name" value="GluRdtase_dimer_dom_sf"/>
</dbReference>
<dbReference type="InterPro" id="IPR036343">
    <property type="entry name" value="GluRdtase_N_sf"/>
</dbReference>
<dbReference type="InterPro" id="IPR036291">
    <property type="entry name" value="NAD(P)-bd_dom_sf"/>
</dbReference>
<dbReference type="InterPro" id="IPR006151">
    <property type="entry name" value="Shikm_DH/Glu-tRNA_Rdtase"/>
</dbReference>
<dbReference type="NCBIfam" id="TIGR01035">
    <property type="entry name" value="hemA"/>
    <property type="match status" value="1"/>
</dbReference>
<dbReference type="PANTHER" id="PTHR43013">
    <property type="entry name" value="GLUTAMYL-TRNA REDUCTASE"/>
    <property type="match status" value="1"/>
</dbReference>
<dbReference type="PANTHER" id="PTHR43013:SF1">
    <property type="entry name" value="GLUTAMYL-TRNA REDUCTASE"/>
    <property type="match status" value="1"/>
</dbReference>
<dbReference type="Pfam" id="PF00745">
    <property type="entry name" value="GlutR_dimer"/>
    <property type="match status" value="1"/>
</dbReference>
<dbReference type="Pfam" id="PF05201">
    <property type="entry name" value="GlutR_N"/>
    <property type="match status" value="1"/>
</dbReference>
<dbReference type="Pfam" id="PF01488">
    <property type="entry name" value="Shikimate_DH"/>
    <property type="match status" value="1"/>
</dbReference>
<dbReference type="PIRSF" id="PIRSF000445">
    <property type="entry name" value="4pyrrol_synth_GluRdtase"/>
    <property type="match status" value="1"/>
</dbReference>
<dbReference type="SUPFAM" id="SSF69742">
    <property type="entry name" value="Glutamyl tRNA-reductase catalytic, N-terminal domain"/>
    <property type="match status" value="1"/>
</dbReference>
<dbReference type="SUPFAM" id="SSF69075">
    <property type="entry name" value="Glutamyl tRNA-reductase dimerization domain"/>
    <property type="match status" value="1"/>
</dbReference>
<dbReference type="SUPFAM" id="SSF51735">
    <property type="entry name" value="NAD(P)-binding Rossmann-fold domains"/>
    <property type="match status" value="1"/>
</dbReference>
<dbReference type="PROSITE" id="PS00747">
    <property type="entry name" value="GLUTR"/>
    <property type="match status" value="1"/>
</dbReference>
<accession>B6EHH4</accession>
<gene>
    <name evidence="1" type="primary">hemA</name>
    <name type="ordered locus">VSAL_I0789</name>
</gene>